<organism>
    <name type="scientific">Citrobacter koseri (strain ATCC BAA-895 / CDC 4225-83 / SGSC4696)</name>
    <dbReference type="NCBI Taxonomy" id="290338"/>
    <lineage>
        <taxon>Bacteria</taxon>
        <taxon>Pseudomonadati</taxon>
        <taxon>Pseudomonadota</taxon>
        <taxon>Gammaproteobacteria</taxon>
        <taxon>Enterobacterales</taxon>
        <taxon>Enterobacteriaceae</taxon>
        <taxon>Citrobacter</taxon>
    </lineage>
</organism>
<keyword id="KW-0378">Hydrolase</keyword>
<keyword id="KW-0460">Magnesium</keyword>
<keyword id="KW-0464">Manganese</keyword>
<keyword id="KW-0479">Metal-binding</keyword>
<keyword id="KW-0546">Nucleotide metabolism</keyword>
<keyword id="KW-0547">Nucleotide-binding</keyword>
<keyword id="KW-1185">Reference proteome</keyword>
<accession>A8ALW2</accession>
<proteinExistence type="inferred from homology"/>
<reference key="1">
    <citation type="submission" date="2007-08" db="EMBL/GenBank/DDBJ databases">
        <authorList>
            <consortium name="The Citrobacter koseri Genome Sequencing Project"/>
            <person name="McClelland M."/>
            <person name="Sanderson E.K."/>
            <person name="Porwollik S."/>
            <person name="Spieth J."/>
            <person name="Clifton W.S."/>
            <person name="Latreille P."/>
            <person name="Courtney L."/>
            <person name="Wang C."/>
            <person name="Pepin K."/>
            <person name="Bhonagiri V."/>
            <person name="Nash W."/>
            <person name="Johnson M."/>
            <person name="Thiruvilangam P."/>
            <person name="Wilson R."/>
        </authorList>
    </citation>
    <scope>NUCLEOTIDE SEQUENCE [LARGE SCALE GENOMIC DNA]</scope>
    <source>
        <strain>ATCC BAA-895 / CDC 4225-83 / SGSC4696</strain>
    </source>
</reference>
<protein>
    <recommendedName>
        <fullName evidence="1">Inosine/xanthosine triphosphatase</fullName>
        <shortName evidence="1">ITPase/XTPase</shortName>
        <ecNumber evidence="1">3.6.1.73</ecNumber>
    </recommendedName>
    <alternativeName>
        <fullName evidence="1">Non-canonical purine NTP phosphatase</fullName>
    </alternativeName>
    <alternativeName>
        <fullName evidence="1">Non-standard purine NTP phosphatase</fullName>
    </alternativeName>
    <alternativeName>
        <fullName evidence="1">Nucleoside-triphosphate phosphatase</fullName>
        <shortName evidence="1">NTPase</shortName>
    </alternativeName>
</protein>
<name>NCPP_CITK8</name>
<evidence type="ECO:0000255" key="1">
    <source>
        <dbReference type="HAMAP-Rule" id="MF_00648"/>
    </source>
</evidence>
<feature type="chain" id="PRO_1000056952" description="Inosine/xanthosine triphosphatase">
    <location>
        <begin position="1"/>
        <end position="171"/>
    </location>
</feature>
<feature type="binding site" evidence="1">
    <location>
        <begin position="8"/>
        <end position="13"/>
    </location>
    <ligand>
        <name>substrate</name>
    </ligand>
</feature>
<feature type="binding site" evidence="1">
    <location>
        <position position="38"/>
    </location>
    <ligand>
        <name>Mg(2+)</name>
        <dbReference type="ChEBI" id="CHEBI:18420"/>
    </ligand>
</feature>
<feature type="binding site" evidence="1">
    <location>
        <position position="68"/>
    </location>
    <ligand>
        <name>Mg(2+)</name>
        <dbReference type="ChEBI" id="CHEBI:18420"/>
    </ligand>
</feature>
<dbReference type="EC" id="3.6.1.73" evidence="1"/>
<dbReference type="EMBL" id="CP000822">
    <property type="protein sequence ID" value="ABV14475.1"/>
    <property type="molecule type" value="Genomic_DNA"/>
</dbReference>
<dbReference type="SMR" id="A8ALW2"/>
<dbReference type="STRING" id="290338.CKO_03392"/>
<dbReference type="GeneID" id="45137149"/>
<dbReference type="KEGG" id="cko:CKO_03392"/>
<dbReference type="HOGENOM" id="CLU_087417_1_0_6"/>
<dbReference type="OrthoDB" id="6334099at2"/>
<dbReference type="Proteomes" id="UP000008148">
    <property type="component" value="Chromosome"/>
</dbReference>
<dbReference type="GO" id="GO:0103023">
    <property type="term" value="F:ITPase activity"/>
    <property type="evidence" value="ECO:0007669"/>
    <property type="project" value="UniProtKB-EC"/>
</dbReference>
<dbReference type="GO" id="GO:0046872">
    <property type="term" value="F:metal ion binding"/>
    <property type="evidence" value="ECO:0007669"/>
    <property type="project" value="UniProtKB-KW"/>
</dbReference>
<dbReference type="GO" id="GO:0000166">
    <property type="term" value="F:nucleotide binding"/>
    <property type="evidence" value="ECO:0007669"/>
    <property type="project" value="UniProtKB-KW"/>
</dbReference>
<dbReference type="GO" id="GO:0017111">
    <property type="term" value="F:ribonucleoside triphosphate phosphatase activity"/>
    <property type="evidence" value="ECO:0000250"/>
    <property type="project" value="UniProtKB"/>
</dbReference>
<dbReference type="GO" id="GO:0009117">
    <property type="term" value="P:nucleotide metabolic process"/>
    <property type="evidence" value="ECO:0007669"/>
    <property type="project" value="UniProtKB-KW"/>
</dbReference>
<dbReference type="GO" id="GO:0006772">
    <property type="term" value="P:thiamine metabolic process"/>
    <property type="evidence" value="ECO:0007669"/>
    <property type="project" value="TreeGrafter"/>
</dbReference>
<dbReference type="FunFam" id="3.90.950.10:FF:000002">
    <property type="entry name" value="Inosine/xanthosine triphosphatase"/>
    <property type="match status" value="1"/>
</dbReference>
<dbReference type="Gene3D" id="3.90.950.10">
    <property type="match status" value="1"/>
</dbReference>
<dbReference type="HAMAP" id="MF_00648">
    <property type="entry name" value="Non_canon_purine_NTPase_YjjX"/>
    <property type="match status" value="1"/>
</dbReference>
<dbReference type="InterPro" id="IPR029001">
    <property type="entry name" value="ITPase-like_fam"/>
</dbReference>
<dbReference type="InterPro" id="IPR002786">
    <property type="entry name" value="Non_canon_purine_NTPase"/>
</dbReference>
<dbReference type="InterPro" id="IPR026533">
    <property type="entry name" value="NTPase/PRRC1"/>
</dbReference>
<dbReference type="InterPro" id="IPR050299">
    <property type="entry name" value="YjjX_NTPase"/>
</dbReference>
<dbReference type="NCBIfam" id="TIGR00258">
    <property type="entry name" value="inosine/xanthosine triphosphatase"/>
    <property type="match status" value="1"/>
</dbReference>
<dbReference type="NCBIfam" id="NF003459">
    <property type="entry name" value="PRK05074.1"/>
    <property type="match status" value="1"/>
</dbReference>
<dbReference type="PANTHER" id="PTHR34699">
    <property type="match status" value="1"/>
</dbReference>
<dbReference type="PANTHER" id="PTHR34699:SF2">
    <property type="entry name" value="NON-CANONICAL PURINE NTP PHOSPHATASE_PRRC1 DOMAIN-CONTAINING PROTEIN"/>
    <property type="match status" value="1"/>
</dbReference>
<dbReference type="Pfam" id="PF01931">
    <property type="entry name" value="NTPase_I-T"/>
    <property type="match status" value="1"/>
</dbReference>
<dbReference type="SUPFAM" id="SSF52972">
    <property type="entry name" value="ITPase-like"/>
    <property type="match status" value="1"/>
</dbReference>
<comment type="function">
    <text evidence="1">Phosphatase that hydrolyzes non-canonical purine nucleotides such as XTP and ITP to their respective diphosphate derivatives. Probably excludes non-canonical purines from DNA/RNA precursor pool, thus preventing their incorporation into DNA/RNA and avoiding chromosomal lesions.</text>
</comment>
<comment type="catalytic activity">
    <reaction evidence="1">
        <text>XTP + H2O = XDP + phosphate + H(+)</text>
        <dbReference type="Rhea" id="RHEA:28406"/>
        <dbReference type="ChEBI" id="CHEBI:15377"/>
        <dbReference type="ChEBI" id="CHEBI:15378"/>
        <dbReference type="ChEBI" id="CHEBI:43474"/>
        <dbReference type="ChEBI" id="CHEBI:59884"/>
        <dbReference type="ChEBI" id="CHEBI:61314"/>
        <dbReference type="EC" id="3.6.1.73"/>
    </reaction>
</comment>
<comment type="catalytic activity">
    <reaction evidence="1">
        <text>ITP + H2O = IDP + phosphate + H(+)</text>
        <dbReference type="Rhea" id="RHEA:28330"/>
        <dbReference type="ChEBI" id="CHEBI:15377"/>
        <dbReference type="ChEBI" id="CHEBI:15378"/>
        <dbReference type="ChEBI" id="CHEBI:43474"/>
        <dbReference type="ChEBI" id="CHEBI:58280"/>
        <dbReference type="ChEBI" id="CHEBI:61402"/>
        <dbReference type="EC" id="3.6.1.73"/>
    </reaction>
</comment>
<comment type="cofactor">
    <cofactor evidence="1">
        <name>Mg(2+)</name>
        <dbReference type="ChEBI" id="CHEBI:18420"/>
    </cofactor>
    <cofactor evidence="1">
        <name>Mn(2+)</name>
        <dbReference type="ChEBI" id="CHEBI:29035"/>
    </cofactor>
    <text evidence="1">Binds 1 divalent metal cation per subunit; can use either Mg(2+) or Mn(2+).</text>
</comment>
<comment type="subunit">
    <text evidence="1">Homodimer.</text>
</comment>
<comment type="similarity">
    <text evidence="1">Belongs to the YjjX NTPase family.</text>
</comment>
<gene>
    <name type="ordered locus">CKO_03392</name>
</gene>
<sequence>MHHVVSATTNPAKIQAILQAFNEIFGEGSCHIESVSVESGVPEQPFGSQETRAGARNRVENARCLRPQADFWVAIEAGIDDDSTFSWVVIENAAQRGEARSATLPLPAVILEKVRQGEALGPVMSQYTGIDEIGRKEGAIGVFTAGKLTRSSVYHQAVILALSPFHNAVYR</sequence>